<dbReference type="EMBL" id="JF433903">
    <property type="protein sequence ID" value="AEA35359.1"/>
    <property type="molecule type" value="mRNA"/>
</dbReference>
<dbReference type="SMR" id="G1AS76"/>
<dbReference type="ConoServer" id="4271">
    <property type="toxin name" value="Vc6.10 precursor"/>
</dbReference>
<dbReference type="GO" id="GO:0005576">
    <property type="term" value="C:extracellular region"/>
    <property type="evidence" value="ECO:0007669"/>
    <property type="project" value="UniProtKB-SubCell"/>
</dbReference>
<dbReference type="GO" id="GO:0008200">
    <property type="term" value="F:ion channel inhibitor activity"/>
    <property type="evidence" value="ECO:0007669"/>
    <property type="project" value="InterPro"/>
</dbReference>
<dbReference type="GO" id="GO:0090729">
    <property type="term" value="F:toxin activity"/>
    <property type="evidence" value="ECO:0007669"/>
    <property type="project" value="UniProtKB-KW"/>
</dbReference>
<dbReference type="InterPro" id="IPR004214">
    <property type="entry name" value="Conotoxin"/>
</dbReference>
<dbReference type="Pfam" id="PF02950">
    <property type="entry name" value="Conotoxin"/>
    <property type="match status" value="1"/>
</dbReference>
<comment type="function">
    <text evidence="1">Inhibits voltage-gated ion channels.</text>
</comment>
<comment type="subcellular location">
    <subcellularLocation>
        <location evidence="1">Secreted</location>
    </subcellularLocation>
</comment>
<comment type="tissue specificity">
    <text>Expressed by the venom duct.</text>
</comment>
<comment type="developmental stage">
    <text evidence="3">Only expressed in adults.</text>
</comment>
<comment type="domain">
    <text evidence="1">The presence of a 'disulfide through disulfide knot' structurally defines this protein as a knottin.</text>
</comment>
<comment type="domain">
    <text>The cysteine framework is VI/VII (C-C-CC-C-C).</text>
</comment>
<comment type="similarity">
    <text evidence="4">Belongs to the conotoxin O2 superfamily.</text>
</comment>
<evidence type="ECO:0000250" key="1"/>
<evidence type="ECO:0000255" key="2"/>
<evidence type="ECO:0000269" key="3">
    <source>
    </source>
</evidence>
<evidence type="ECO:0000305" key="4"/>
<reference key="1">
    <citation type="journal article" date="2011" name="J. Biol. Chem.">
        <title>Embryonic toxin expression in the cone snail Conus victoriae: primed to kill or divergent function?</title>
        <authorList>
            <person name="Safavi-Hemami H."/>
            <person name="Siero W.A."/>
            <person name="Kuang Z."/>
            <person name="Williamson N.A."/>
            <person name="Karas J.A."/>
            <person name="Page L.R."/>
            <person name="Macmillan D."/>
            <person name="Callaghan B."/>
            <person name="Kompella S.N."/>
            <person name="Adams D.J."/>
            <person name="Norton R.S."/>
            <person name="Purcell A.W."/>
        </authorList>
    </citation>
    <scope>NUCLEOTIDE SEQUENCE [MRNA]</scope>
    <scope>DEVELOPMENTAL STAGE</scope>
    <source>
        <tissue>Embryo</tissue>
        <tissue>Venom duct</tissue>
    </source>
</reference>
<accession>G1AS76</accession>
<feature type="signal peptide" evidence="2">
    <location>
        <begin position="1"/>
        <end position="19"/>
    </location>
</feature>
<feature type="propeptide" id="PRO_0000425169" evidence="1">
    <location>
        <begin position="20"/>
        <end position="40"/>
    </location>
</feature>
<feature type="peptide" id="PRO_0000425170" description="Conotoxin Vc6.10">
    <location>
        <begin position="42"/>
        <end position="70"/>
    </location>
</feature>
<feature type="disulfide bond" evidence="1">
    <location>
        <begin position="43"/>
        <end position="57"/>
    </location>
</feature>
<feature type="disulfide bond" evidence="1">
    <location>
        <begin position="50"/>
        <end position="62"/>
    </location>
</feature>
<feature type="disulfide bond" evidence="1">
    <location>
        <begin position="56"/>
        <end position="69"/>
    </location>
</feature>
<proteinExistence type="evidence at transcript level"/>
<keyword id="KW-1015">Disulfide bond</keyword>
<keyword id="KW-0872">Ion channel impairing toxin</keyword>
<keyword id="KW-0960">Knottin</keyword>
<keyword id="KW-0964">Secreted</keyword>
<keyword id="KW-0732">Signal</keyword>
<keyword id="KW-0800">Toxin</keyword>
<sequence>MEKLTILLLVAAVLTSTQALIQGGADERQKAKINFLSRSDRECRGYNAPCSAGAPCCSWWTCSTQTSRCF</sequence>
<name>O26A_CONVC</name>
<protein>
    <recommendedName>
        <fullName>Conotoxin Vc6.10</fullName>
    </recommendedName>
</protein>
<organism>
    <name type="scientific">Conus victoriae</name>
    <name type="common">Queen Victoria cone</name>
    <dbReference type="NCBI Taxonomy" id="319920"/>
    <lineage>
        <taxon>Eukaryota</taxon>
        <taxon>Metazoa</taxon>
        <taxon>Spiralia</taxon>
        <taxon>Lophotrochozoa</taxon>
        <taxon>Mollusca</taxon>
        <taxon>Gastropoda</taxon>
        <taxon>Caenogastropoda</taxon>
        <taxon>Neogastropoda</taxon>
        <taxon>Conoidea</taxon>
        <taxon>Conidae</taxon>
        <taxon>Conus</taxon>
        <taxon>Cylinder</taxon>
    </lineage>
</organism>